<accession>Q9BRA2</accession>
<accession>A8K7E8</accession>
<keyword id="KW-0002">3D-structure</keyword>
<keyword id="KW-0007">Acetylation</keyword>
<keyword id="KW-0963">Cytoplasm</keyword>
<keyword id="KW-0903">Direct protein sequencing</keyword>
<keyword id="KW-1015">Disulfide bond</keyword>
<keyword id="KW-1267">Proteomics identification</keyword>
<keyword id="KW-0676">Redox-active center</keyword>
<keyword id="KW-1185">Reference proteome</keyword>
<feature type="initiator methionine" description="Removed" evidence="7">
    <location>
        <position position="1"/>
    </location>
</feature>
<feature type="chain" id="PRO_0000120022" description="Thioredoxin domain-containing protein 17">
    <location>
        <begin position="2"/>
        <end position="123"/>
    </location>
</feature>
<feature type="domain" description="Thioredoxin" evidence="1">
    <location>
        <begin position="41"/>
        <end position="123"/>
    </location>
</feature>
<feature type="active site" description="Nucleophile" evidence="3">
    <location>
        <position position="43"/>
    </location>
</feature>
<feature type="active site" description="Nucleophile" evidence="3">
    <location>
        <position position="46"/>
    </location>
</feature>
<feature type="site" description="Contributes to redox potential value" evidence="6">
    <location>
        <position position="44"/>
    </location>
</feature>
<feature type="site" description="Contributes to redox potential value" evidence="6">
    <location>
        <position position="45"/>
    </location>
</feature>
<feature type="modified residue" description="N-acetylalanine" evidence="7">
    <location>
        <position position="2"/>
    </location>
</feature>
<feature type="disulfide bond" description="Redox-active" evidence="4">
    <location>
        <begin position="43"/>
        <end position="46"/>
    </location>
</feature>
<feature type="mutagenesis site" description="Loss of peroxidase activity." evidence="3">
    <original>C</original>
    <variation>S</variation>
    <location>
        <position position="43"/>
    </location>
</feature>
<feature type="mutagenesis site" description="Loss of peroxidase activity." evidence="3">
    <original>C</original>
    <variation>S</variation>
    <location>
        <position position="46"/>
    </location>
</feature>
<feature type="strand" evidence="8">
    <location>
        <begin position="5"/>
        <end position="11"/>
    </location>
</feature>
<feature type="helix" evidence="8">
    <location>
        <begin position="12"/>
        <end position="20"/>
    </location>
</feature>
<feature type="turn" evidence="8">
    <location>
        <begin position="21"/>
        <end position="24"/>
    </location>
</feature>
<feature type="strand" evidence="8">
    <location>
        <begin position="25"/>
        <end position="32"/>
    </location>
</feature>
<feature type="helix" evidence="8">
    <location>
        <begin position="44"/>
        <end position="56"/>
    </location>
</feature>
<feature type="helix" evidence="8">
    <location>
        <begin position="57"/>
        <end position="59"/>
    </location>
</feature>
<feature type="strand" evidence="8">
    <location>
        <begin position="64"/>
        <end position="70"/>
    </location>
</feature>
<feature type="helix" evidence="8">
    <location>
        <begin position="74"/>
        <end position="78"/>
    </location>
</feature>
<feature type="helix" evidence="8">
    <location>
        <begin position="83"/>
        <end position="88"/>
    </location>
</feature>
<feature type="strand" evidence="8">
    <location>
        <begin position="92"/>
        <end position="98"/>
    </location>
</feature>
<feature type="strand" evidence="8">
    <location>
        <begin position="104"/>
        <end position="106"/>
    </location>
</feature>
<feature type="helix" evidence="8">
    <location>
        <begin position="107"/>
        <end position="111"/>
    </location>
</feature>
<feature type="helix" evidence="8">
    <location>
        <begin position="113"/>
        <end position="121"/>
    </location>
</feature>
<proteinExistence type="evidence at protein level"/>
<protein>
    <recommendedName>
        <fullName>Thioredoxin domain-containing protein 17</fullName>
    </recommendedName>
    <alternativeName>
        <fullName>14 kDa thioredoxin-related protein</fullName>
        <shortName>TRP14</shortName>
    </alternativeName>
    <alternativeName>
        <fullName>Protein 42-9-9</fullName>
    </alternativeName>
    <alternativeName>
        <fullName>Thioredoxin-like protein 5</fullName>
    </alternativeName>
</protein>
<sequence>MARYEEVSVSGFEEFHRAVEQHNGKTIFAYFTGSKDAGGKSWCPDCVQAEPVVREGLKHISEGCVFIYCQVGEKPYWKDPNNDFRKNLKVTAVPTLLKYGTPQKLVESECLQANLVEMLFSED</sequence>
<gene>
    <name type="primary">TXNDC17</name>
    <name type="synonym">TXNL5</name>
</gene>
<organism>
    <name type="scientific">Homo sapiens</name>
    <name type="common">Human</name>
    <dbReference type="NCBI Taxonomy" id="9606"/>
    <lineage>
        <taxon>Eukaryota</taxon>
        <taxon>Metazoa</taxon>
        <taxon>Chordata</taxon>
        <taxon>Craniata</taxon>
        <taxon>Vertebrata</taxon>
        <taxon>Euteleostomi</taxon>
        <taxon>Mammalia</taxon>
        <taxon>Eutheria</taxon>
        <taxon>Euarchontoglires</taxon>
        <taxon>Primates</taxon>
        <taxon>Haplorrhini</taxon>
        <taxon>Catarrhini</taxon>
        <taxon>Hominidae</taxon>
        <taxon>Homo</taxon>
    </lineage>
</organism>
<comment type="function">
    <text evidence="2 3">Disulfide reductase. May participate in various redox reactions through the reversible oxidation of its active center dithiol to a disulfide and catalyze dithiol-disulfide exchange reactions. Modulates TNF-alpha signaling and NF-kappa-B activation. Has peroxidase activity and may contribute to the elimination of cellular hydrogen peroxide.</text>
</comment>
<comment type="subunit">
    <text evidence="2">Interacts with TRXR1 and DYNLL1/DNCL1.</text>
</comment>
<comment type="interaction">
    <interactant intactId="EBI-1055906">
        <id>Q9BRA2</id>
    </interactant>
    <interactant intactId="EBI-371922">
        <id>Q96B26</id>
        <label>EXOSC8</label>
    </interactant>
    <organismsDiffer>false</organismsDiffer>
    <experiments>6</experiments>
</comment>
<comment type="interaction">
    <interactant intactId="EBI-1055906">
        <id>Q9BRA2</id>
    </interactant>
    <interactant intactId="EBI-6509505">
        <id>Q0VD86</id>
        <label>INCA1</label>
    </interactant>
    <organismsDiffer>false</organismsDiffer>
    <experiments>3</experiments>
</comment>
<comment type="interaction">
    <interactant intactId="EBI-1055906">
        <id>Q9BRA2</id>
    </interactant>
    <interactant intactId="EBI-3941207">
        <id>Q96T51</id>
        <label>RUFY1</label>
    </interactant>
    <organismsDiffer>false</organismsDiffer>
    <experiments>3</experiments>
</comment>
<comment type="interaction">
    <interactant intactId="EBI-1055906">
        <id>Q9BRA2</id>
    </interactant>
    <interactant intactId="EBI-717399">
        <id>Q9BSI4</id>
        <label>TINF2</label>
    </interactant>
    <organismsDiffer>false</organismsDiffer>
    <experiments>2</experiments>
</comment>
<comment type="subcellular location">
    <subcellularLocation>
        <location evidence="3">Cytoplasm</location>
    </subcellularLocation>
</comment>
<comment type="tissue specificity">
    <text evidence="3">Ubiquitously expressed in cell lines.</text>
</comment>
<comment type="PTM">
    <text>The oxidized protein is reduced by TRXR1.</text>
</comment>
<comment type="similarity">
    <text evidence="5">Belongs to the thioredoxin family.</text>
</comment>
<dbReference type="EMBL" id="AJ344101">
    <property type="protein sequence ID" value="CAC51435.1"/>
    <property type="molecule type" value="mRNA"/>
</dbReference>
<dbReference type="EMBL" id="AK291963">
    <property type="protein sequence ID" value="BAF84652.1"/>
    <property type="molecule type" value="mRNA"/>
</dbReference>
<dbReference type="EMBL" id="CH471108">
    <property type="protein sequence ID" value="EAW90302.1"/>
    <property type="molecule type" value="Genomic_DNA"/>
</dbReference>
<dbReference type="EMBL" id="BC006405">
    <property type="protein sequence ID" value="AAH06405.1"/>
    <property type="molecule type" value="mRNA"/>
</dbReference>
<dbReference type="CCDS" id="CCDS11077.1"/>
<dbReference type="RefSeq" id="NP_116120.1">
    <property type="nucleotide sequence ID" value="NM_032731.4"/>
</dbReference>
<dbReference type="PDB" id="1WOU">
    <property type="method" value="X-ray"/>
    <property type="resolution" value="1.80 A"/>
    <property type="chains" value="A=1-123"/>
</dbReference>
<dbReference type="PDBsum" id="1WOU"/>
<dbReference type="SMR" id="Q9BRA2"/>
<dbReference type="BioGRID" id="124277">
    <property type="interactions" value="52"/>
</dbReference>
<dbReference type="FunCoup" id="Q9BRA2">
    <property type="interactions" value="1000"/>
</dbReference>
<dbReference type="IntAct" id="Q9BRA2">
    <property type="interactions" value="10"/>
</dbReference>
<dbReference type="STRING" id="9606.ENSP00000250101"/>
<dbReference type="ChEMBL" id="CHEMBL4295935"/>
<dbReference type="GlyGen" id="Q9BRA2">
    <property type="glycosylation" value="1 site, 1 O-linked glycan (1 site)"/>
</dbReference>
<dbReference type="iPTMnet" id="Q9BRA2"/>
<dbReference type="PhosphoSitePlus" id="Q9BRA2"/>
<dbReference type="BioMuta" id="TXNDC17"/>
<dbReference type="DMDM" id="74732856"/>
<dbReference type="REPRODUCTION-2DPAGE" id="IPI00646689"/>
<dbReference type="jPOST" id="Q9BRA2"/>
<dbReference type="MassIVE" id="Q9BRA2"/>
<dbReference type="PaxDb" id="9606-ENSP00000250101"/>
<dbReference type="PeptideAtlas" id="Q9BRA2"/>
<dbReference type="ProteomicsDB" id="78752"/>
<dbReference type="Pumba" id="Q9BRA2"/>
<dbReference type="TopDownProteomics" id="Q9BRA2"/>
<dbReference type="Antibodypedia" id="11673">
    <property type="antibodies" value="86 antibodies from 25 providers"/>
</dbReference>
<dbReference type="DNASU" id="84817"/>
<dbReference type="Ensembl" id="ENST00000250101.10">
    <property type="protein sequence ID" value="ENSP00000250101.5"/>
    <property type="gene ID" value="ENSG00000129235.11"/>
</dbReference>
<dbReference type="GeneID" id="84817"/>
<dbReference type="KEGG" id="hsa:84817"/>
<dbReference type="MANE-Select" id="ENST00000250101.10">
    <property type="protein sequence ID" value="ENSP00000250101.5"/>
    <property type="RefSeq nucleotide sequence ID" value="NM_032731.4"/>
    <property type="RefSeq protein sequence ID" value="NP_116120.1"/>
</dbReference>
<dbReference type="UCSC" id="uc002gdf.5">
    <property type="organism name" value="human"/>
</dbReference>
<dbReference type="AGR" id="HGNC:28218"/>
<dbReference type="CTD" id="84817"/>
<dbReference type="DisGeNET" id="84817"/>
<dbReference type="GeneCards" id="TXNDC17"/>
<dbReference type="HGNC" id="HGNC:28218">
    <property type="gene designation" value="TXNDC17"/>
</dbReference>
<dbReference type="HPA" id="ENSG00000129235">
    <property type="expression patterns" value="Tissue enhanced (esophagus)"/>
</dbReference>
<dbReference type="neXtProt" id="NX_Q9BRA2"/>
<dbReference type="OpenTargets" id="ENSG00000129235"/>
<dbReference type="PharmGKB" id="PA162407489"/>
<dbReference type="VEuPathDB" id="HostDB:ENSG00000129235"/>
<dbReference type="eggNOG" id="KOG3425">
    <property type="taxonomic scope" value="Eukaryota"/>
</dbReference>
<dbReference type="GeneTree" id="ENSGT00390000012195"/>
<dbReference type="HOGENOM" id="CLU_120161_0_1_1"/>
<dbReference type="InParanoid" id="Q9BRA2"/>
<dbReference type="OMA" id="PRDYWKN"/>
<dbReference type="OrthoDB" id="78947at2759"/>
<dbReference type="PAN-GO" id="Q9BRA2">
    <property type="GO annotations" value="2 GO annotations based on evolutionary models"/>
</dbReference>
<dbReference type="PhylomeDB" id="Q9BRA2"/>
<dbReference type="TreeFam" id="TF313854"/>
<dbReference type="BRENDA" id="1.8.1.6">
    <property type="organism ID" value="2681"/>
</dbReference>
<dbReference type="PathwayCommons" id="Q9BRA2"/>
<dbReference type="SignaLink" id="Q9BRA2"/>
<dbReference type="BioGRID-ORCS" id="84817">
    <property type="hits" value="74 hits in 1162 CRISPR screens"/>
</dbReference>
<dbReference type="CD-CODE" id="DEE660B4">
    <property type="entry name" value="Stress granule"/>
</dbReference>
<dbReference type="ChiTaRS" id="TXNDC17">
    <property type="organism name" value="human"/>
</dbReference>
<dbReference type="EvolutionaryTrace" id="Q9BRA2"/>
<dbReference type="GenomeRNAi" id="84817"/>
<dbReference type="Pharos" id="Q9BRA2">
    <property type="development level" value="Tbio"/>
</dbReference>
<dbReference type="PRO" id="PR:Q9BRA2"/>
<dbReference type="Proteomes" id="UP000005640">
    <property type="component" value="Chromosome 17"/>
</dbReference>
<dbReference type="RNAct" id="Q9BRA2">
    <property type="molecule type" value="protein"/>
</dbReference>
<dbReference type="Bgee" id="ENSG00000129235">
    <property type="expression patterns" value="Expressed in pancreatic ductal cell and 181 other cell types or tissues"/>
</dbReference>
<dbReference type="ExpressionAtlas" id="Q9BRA2">
    <property type="expression patterns" value="baseline and differential"/>
</dbReference>
<dbReference type="GO" id="GO:0005829">
    <property type="term" value="C:cytosol"/>
    <property type="evidence" value="ECO:0000314"/>
    <property type="project" value="UniProtKB"/>
</dbReference>
<dbReference type="GO" id="GO:0070062">
    <property type="term" value="C:extracellular exosome"/>
    <property type="evidence" value="ECO:0007005"/>
    <property type="project" value="UniProtKB"/>
</dbReference>
<dbReference type="GO" id="GO:0004601">
    <property type="term" value="F:peroxidase activity"/>
    <property type="evidence" value="ECO:0000314"/>
    <property type="project" value="UniProtKB"/>
</dbReference>
<dbReference type="GO" id="GO:0047134">
    <property type="term" value="F:protein-disulfide reductase [NAD(P)H] activity"/>
    <property type="evidence" value="ECO:0000314"/>
    <property type="project" value="UniProtKB"/>
</dbReference>
<dbReference type="GO" id="GO:0033209">
    <property type="term" value="P:tumor necrosis factor-mediated signaling pathway"/>
    <property type="evidence" value="ECO:0000315"/>
    <property type="project" value="UniProtKB"/>
</dbReference>
<dbReference type="CDD" id="cd02952">
    <property type="entry name" value="TRP14_like"/>
    <property type="match status" value="1"/>
</dbReference>
<dbReference type="FunFam" id="3.40.30.10:FF:000124">
    <property type="entry name" value="Thioredoxin domain-containing 17"/>
    <property type="match status" value="1"/>
</dbReference>
<dbReference type="Gene3D" id="3.40.30.10">
    <property type="entry name" value="Glutaredoxin"/>
    <property type="match status" value="1"/>
</dbReference>
<dbReference type="InterPro" id="IPR036249">
    <property type="entry name" value="Thioredoxin-like_sf"/>
</dbReference>
<dbReference type="InterPro" id="IPR045108">
    <property type="entry name" value="TXNDC17-like"/>
</dbReference>
<dbReference type="InterPro" id="IPR010357">
    <property type="entry name" value="TXNDC17_dom"/>
</dbReference>
<dbReference type="PANTHER" id="PTHR12452">
    <property type="entry name" value="42-9-9 PROTEIN-RELATED"/>
    <property type="match status" value="1"/>
</dbReference>
<dbReference type="PANTHER" id="PTHR12452:SF0">
    <property type="entry name" value="THIOREDOXIN DOMAIN-CONTAINING PROTEIN 17"/>
    <property type="match status" value="1"/>
</dbReference>
<dbReference type="Pfam" id="PF06110">
    <property type="entry name" value="TXD17-like_Trx"/>
    <property type="match status" value="1"/>
</dbReference>
<dbReference type="SUPFAM" id="SSF52833">
    <property type="entry name" value="Thioredoxin-like"/>
    <property type="match status" value="1"/>
</dbReference>
<name>TXD17_HUMAN</name>
<reference key="1">
    <citation type="thesis" date="2001" institute="University of Goettingen" country="Germany">
        <authorList>
            <person name="Schmidt T."/>
        </authorList>
    </citation>
    <scope>NUCLEOTIDE SEQUENCE [MRNA]</scope>
    <source>
        <tissue>Umbilical vein endothelial cell</tissue>
    </source>
</reference>
<reference key="2">
    <citation type="journal article" date="2004" name="Nat. Genet.">
        <title>Complete sequencing and characterization of 21,243 full-length human cDNAs.</title>
        <authorList>
            <person name="Ota T."/>
            <person name="Suzuki Y."/>
            <person name="Nishikawa T."/>
            <person name="Otsuki T."/>
            <person name="Sugiyama T."/>
            <person name="Irie R."/>
            <person name="Wakamatsu A."/>
            <person name="Hayashi K."/>
            <person name="Sato H."/>
            <person name="Nagai K."/>
            <person name="Kimura K."/>
            <person name="Makita H."/>
            <person name="Sekine M."/>
            <person name="Obayashi M."/>
            <person name="Nishi T."/>
            <person name="Shibahara T."/>
            <person name="Tanaka T."/>
            <person name="Ishii S."/>
            <person name="Yamamoto J."/>
            <person name="Saito K."/>
            <person name="Kawai Y."/>
            <person name="Isono Y."/>
            <person name="Nakamura Y."/>
            <person name="Nagahari K."/>
            <person name="Murakami K."/>
            <person name="Yasuda T."/>
            <person name="Iwayanagi T."/>
            <person name="Wagatsuma M."/>
            <person name="Shiratori A."/>
            <person name="Sudo H."/>
            <person name="Hosoiri T."/>
            <person name="Kaku Y."/>
            <person name="Kodaira H."/>
            <person name="Kondo H."/>
            <person name="Sugawara M."/>
            <person name="Takahashi M."/>
            <person name="Kanda K."/>
            <person name="Yokoi T."/>
            <person name="Furuya T."/>
            <person name="Kikkawa E."/>
            <person name="Omura Y."/>
            <person name="Abe K."/>
            <person name="Kamihara K."/>
            <person name="Katsuta N."/>
            <person name="Sato K."/>
            <person name="Tanikawa M."/>
            <person name="Yamazaki M."/>
            <person name="Ninomiya K."/>
            <person name="Ishibashi T."/>
            <person name="Yamashita H."/>
            <person name="Murakawa K."/>
            <person name="Fujimori K."/>
            <person name="Tanai H."/>
            <person name="Kimata M."/>
            <person name="Watanabe M."/>
            <person name="Hiraoka S."/>
            <person name="Chiba Y."/>
            <person name="Ishida S."/>
            <person name="Ono Y."/>
            <person name="Takiguchi S."/>
            <person name="Watanabe S."/>
            <person name="Yosida M."/>
            <person name="Hotuta T."/>
            <person name="Kusano J."/>
            <person name="Kanehori K."/>
            <person name="Takahashi-Fujii A."/>
            <person name="Hara H."/>
            <person name="Tanase T.-O."/>
            <person name="Nomura Y."/>
            <person name="Togiya S."/>
            <person name="Komai F."/>
            <person name="Hara R."/>
            <person name="Takeuchi K."/>
            <person name="Arita M."/>
            <person name="Imose N."/>
            <person name="Musashino K."/>
            <person name="Yuuki H."/>
            <person name="Oshima A."/>
            <person name="Sasaki N."/>
            <person name="Aotsuka S."/>
            <person name="Yoshikawa Y."/>
            <person name="Matsunawa H."/>
            <person name="Ichihara T."/>
            <person name="Shiohata N."/>
            <person name="Sano S."/>
            <person name="Moriya S."/>
            <person name="Momiyama H."/>
            <person name="Satoh N."/>
            <person name="Takami S."/>
            <person name="Terashima Y."/>
            <person name="Suzuki O."/>
            <person name="Nakagawa S."/>
            <person name="Senoh A."/>
            <person name="Mizoguchi H."/>
            <person name="Goto Y."/>
            <person name="Shimizu F."/>
            <person name="Wakebe H."/>
            <person name="Hishigaki H."/>
            <person name="Watanabe T."/>
            <person name="Sugiyama A."/>
            <person name="Takemoto M."/>
            <person name="Kawakami B."/>
            <person name="Yamazaki M."/>
            <person name="Watanabe K."/>
            <person name="Kumagai A."/>
            <person name="Itakura S."/>
            <person name="Fukuzumi Y."/>
            <person name="Fujimori Y."/>
            <person name="Komiyama M."/>
            <person name="Tashiro H."/>
            <person name="Tanigami A."/>
            <person name="Fujiwara T."/>
            <person name="Ono T."/>
            <person name="Yamada K."/>
            <person name="Fujii Y."/>
            <person name="Ozaki K."/>
            <person name="Hirao M."/>
            <person name="Ohmori Y."/>
            <person name="Kawabata A."/>
            <person name="Hikiji T."/>
            <person name="Kobatake N."/>
            <person name="Inagaki H."/>
            <person name="Ikema Y."/>
            <person name="Okamoto S."/>
            <person name="Okitani R."/>
            <person name="Kawakami T."/>
            <person name="Noguchi S."/>
            <person name="Itoh T."/>
            <person name="Shigeta K."/>
            <person name="Senba T."/>
            <person name="Matsumura K."/>
            <person name="Nakajima Y."/>
            <person name="Mizuno T."/>
            <person name="Morinaga M."/>
            <person name="Sasaki M."/>
            <person name="Togashi T."/>
            <person name="Oyama M."/>
            <person name="Hata H."/>
            <person name="Watanabe M."/>
            <person name="Komatsu T."/>
            <person name="Mizushima-Sugano J."/>
            <person name="Satoh T."/>
            <person name="Shirai Y."/>
            <person name="Takahashi Y."/>
            <person name="Nakagawa K."/>
            <person name="Okumura K."/>
            <person name="Nagase T."/>
            <person name="Nomura N."/>
            <person name="Kikuchi H."/>
            <person name="Masuho Y."/>
            <person name="Yamashita R."/>
            <person name="Nakai K."/>
            <person name="Yada T."/>
            <person name="Nakamura Y."/>
            <person name="Ohara O."/>
            <person name="Isogai T."/>
            <person name="Sugano S."/>
        </authorList>
    </citation>
    <scope>NUCLEOTIDE SEQUENCE [LARGE SCALE MRNA]</scope>
</reference>
<reference key="3">
    <citation type="submission" date="2005-09" db="EMBL/GenBank/DDBJ databases">
        <authorList>
            <person name="Mural R.J."/>
            <person name="Istrail S."/>
            <person name="Sutton G.G."/>
            <person name="Florea L."/>
            <person name="Halpern A.L."/>
            <person name="Mobarry C.M."/>
            <person name="Lippert R."/>
            <person name="Walenz B."/>
            <person name="Shatkay H."/>
            <person name="Dew I."/>
            <person name="Miller J.R."/>
            <person name="Flanigan M.J."/>
            <person name="Edwards N.J."/>
            <person name="Bolanos R."/>
            <person name="Fasulo D."/>
            <person name="Halldorsson B.V."/>
            <person name="Hannenhalli S."/>
            <person name="Turner R."/>
            <person name="Yooseph S."/>
            <person name="Lu F."/>
            <person name="Nusskern D.R."/>
            <person name="Shue B.C."/>
            <person name="Zheng X.H."/>
            <person name="Zhong F."/>
            <person name="Delcher A.L."/>
            <person name="Huson D.H."/>
            <person name="Kravitz S.A."/>
            <person name="Mouchard L."/>
            <person name="Reinert K."/>
            <person name="Remington K.A."/>
            <person name="Clark A.G."/>
            <person name="Waterman M.S."/>
            <person name="Eichler E.E."/>
            <person name="Adams M.D."/>
            <person name="Hunkapiller M.W."/>
            <person name="Myers E.W."/>
            <person name="Venter J.C."/>
        </authorList>
    </citation>
    <scope>NUCLEOTIDE SEQUENCE [LARGE SCALE GENOMIC DNA]</scope>
</reference>
<reference key="4">
    <citation type="journal article" date="2004" name="Genome Res.">
        <title>The status, quality, and expansion of the NIH full-length cDNA project: the Mammalian Gene Collection (MGC).</title>
        <authorList>
            <consortium name="The MGC Project Team"/>
        </authorList>
    </citation>
    <scope>NUCLEOTIDE SEQUENCE [LARGE SCALE MRNA]</scope>
    <source>
        <tissue>Skin</tissue>
    </source>
</reference>
<reference key="5">
    <citation type="journal article" date="2004" name="J. Biol. Chem.">
        <title>Identification and characterization of TRP14, a thioredoxin-related protein of 14 kDa. New insights into the specificity of thioredoxin function.</title>
        <authorList>
            <person name="Jeong W."/>
            <person name="Yoon H.W."/>
            <person name="Lee S.-R."/>
            <person name="Rhee S.G."/>
        </authorList>
    </citation>
    <scope>PROTEIN SEQUENCE OF 41-58</scope>
    <scope>FUNCTION</scope>
    <scope>MUTAGENESIS OF CYS-43 AND CYS-46</scope>
    <scope>SUBCELLULAR LOCATION</scope>
    <scope>TISSUE SPECIFICITY</scope>
</reference>
<reference key="6">
    <citation type="journal article" date="2004" name="J. Biol. Chem.">
        <title>Roles of TRP14, a thioredoxin-related protein in tumor necrosis factor-alpha signaling pathways.</title>
        <authorList>
            <person name="Jeong W."/>
            <person name="Chang T.-S."/>
            <person name="Boja E.S."/>
            <person name="Fales H.M."/>
            <person name="Rhee S.G."/>
        </authorList>
    </citation>
    <scope>FUNCTION</scope>
    <scope>INTERACTION WITH DYNLL1</scope>
</reference>
<reference key="7">
    <citation type="journal article" date="2009" name="Anal. Chem.">
        <title>Lys-N and trypsin cover complementary parts of the phosphoproteome in a refined SCX-based approach.</title>
        <authorList>
            <person name="Gauci S."/>
            <person name="Helbig A.O."/>
            <person name="Slijper M."/>
            <person name="Krijgsveld J."/>
            <person name="Heck A.J."/>
            <person name="Mohammed S."/>
        </authorList>
    </citation>
    <scope>ACETYLATION [LARGE SCALE ANALYSIS] AT ALA-2</scope>
    <scope>CLEAVAGE OF INITIATOR METHIONINE [LARGE SCALE ANALYSIS]</scope>
    <scope>IDENTIFICATION BY MASS SPECTROMETRY [LARGE SCALE ANALYSIS]</scope>
</reference>
<reference key="8">
    <citation type="journal article" date="2011" name="BMC Syst. Biol.">
        <title>Initial characterization of the human central proteome.</title>
        <authorList>
            <person name="Burkard T.R."/>
            <person name="Planyavsky M."/>
            <person name="Kaupe I."/>
            <person name="Breitwieser F.P."/>
            <person name="Buerckstuemmer T."/>
            <person name="Bennett K.L."/>
            <person name="Superti-Furga G."/>
            <person name="Colinge J."/>
        </authorList>
    </citation>
    <scope>IDENTIFICATION BY MASS SPECTROMETRY [LARGE SCALE ANALYSIS]</scope>
</reference>
<reference key="9">
    <citation type="journal article" date="2004" name="J. Biol. Chem.">
        <title>Structural basis of cellular redox regulation by human TRP14.</title>
        <authorList>
            <person name="Woo J.R."/>
            <person name="Kim S.J."/>
            <person name="Jeong W."/>
            <person name="Cho Y.H."/>
            <person name="Lee S.C."/>
            <person name="Chung Y.J."/>
            <person name="Rhee S.G."/>
            <person name="Ryu S.E."/>
        </authorList>
    </citation>
    <scope>X-RAY CRYSTALLOGRAPHY (1.8 ANGSTROMS)</scope>
    <scope>DISULFIDE BOND</scope>
</reference>
<evidence type="ECO:0000255" key="1"/>
<evidence type="ECO:0000269" key="2">
    <source>
    </source>
</evidence>
<evidence type="ECO:0000269" key="3">
    <source>
    </source>
</evidence>
<evidence type="ECO:0000269" key="4">
    <source>
    </source>
</evidence>
<evidence type="ECO:0000305" key="5"/>
<evidence type="ECO:0000305" key="6">
    <source>
    </source>
</evidence>
<evidence type="ECO:0007744" key="7">
    <source>
    </source>
</evidence>
<evidence type="ECO:0007829" key="8">
    <source>
        <dbReference type="PDB" id="1WOU"/>
    </source>
</evidence>